<gene>
    <name type="ordered locus">Rv0634A</name>
</gene>
<evidence type="ECO:0000256" key="1">
    <source>
        <dbReference type="SAM" id="MobiDB-lite"/>
    </source>
</evidence>
<sequence length="83" mass="9426">MGSDCGCGGYLWSMLKRVEIEVDDDLIQKVIRRYRVKGAREAVNLALRTLLGEADTAEHGHDDEYDEFSDPNAWVPRRSRDTG</sequence>
<accession>P9WKS5</accession>
<accession>L0T4F4</accession>
<accession>Q79FY1</accession>
<accession>Q8VKH3</accession>
<organism>
    <name type="scientific">Mycobacterium tuberculosis (strain ATCC 25618 / H37Rv)</name>
    <dbReference type="NCBI Taxonomy" id="83332"/>
    <lineage>
        <taxon>Bacteria</taxon>
        <taxon>Bacillati</taxon>
        <taxon>Actinomycetota</taxon>
        <taxon>Actinomycetes</taxon>
        <taxon>Mycobacteriales</taxon>
        <taxon>Mycobacteriaceae</taxon>
        <taxon>Mycobacterium</taxon>
        <taxon>Mycobacterium tuberculosis complex</taxon>
    </lineage>
</organism>
<dbReference type="EMBL" id="AL123456">
    <property type="protein sequence ID" value="CCP43376.1"/>
    <property type="molecule type" value="Genomic_DNA"/>
</dbReference>
<dbReference type="RefSeq" id="WP_003403268.1">
    <property type="nucleotide sequence ID" value="NC_000962.3"/>
</dbReference>
<dbReference type="RefSeq" id="YP_177629.1">
    <property type="nucleotide sequence ID" value="NC_000962.3"/>
</dbReference>
<dbReference type="SMR" id="P9WKS5"/>
<dbReference type="STRING" id="83332.Rv0634A"/>
<dbReference type="PaxDb" id="83332-Rv0634A"/>
<dbReference type="DNASU" id="3205041"/>
<dbReference type="GeneID" id="3205041"/>
<dbReference type="KEGG" id="mtu:Rv0634A"/>
<dbReference type="KEGG" id="mtv:RVBD_0634A"/>
<dbReference type="PATRIC" id="fig|83332.111.peg.703"/>
<dbReference type="TubercuList" id="Rv0634A"/>
<dbReference type="eggNOG" id="COG5450">
    <property type="taxonomic scope" value="Bacteria"/>
</dbReference>
<dbReference type="InParanoid" id="P9WKS5"/>
<dbReference type="OrthoDB" id="4736246at2"/>
<dbReference type="Proteomes" id="UP000001584">
    <property type="component" value="Chromosome"/>
</dbReference>
<dbReference type="InterPro" id="IPR019239">
    <property type="entry name" value="VapB_antitoxin"/>
</dbReference>
<dbReference type="Pfam" id="PF09957">
    <property type="entry name" value="VapB_antitoxin"/>
    <property type="match status" value="1"/>
</dbReference>
<feature type="chain" id="PRO_0000399398" description="Uncharacterized protein Rv0634A">
    <location>
        <begin position="1"/>
        <end position="83"/>
    </location>
</feature>
<feature type="region of interest" description="Disordered" evidence="1">
    <location>
        <begin position="58"/>
        <end position="83"/>
    </location>
</feature>
<keyword id="KW-0903">Direct protein sequencing</keyword>
<keyword id="KW-1185">Reference proteome</keyword>
<reference key="1">
    <citation type="journal article" date="1998" name="Nature">
        <title>Deciphering the biology of Mycobacterium tuberculosis from the complete genome sequence.</title>
        <authorList>
            <person name="Cole S.T."/>
            <person name="Brosch R."/>
            <person name="Parkhill J."/>
            <person name="Garnier T."/>
            <person name="Churcher C.M."/>
            <person name="Harris D.E."/>
            <person name="Gordon S.V."/>
            <person name="Eiglmeier K."/>
            <person name="Gas S."/>
            <person name="Barry C.E. III"/>
            <person name="Tekaia F."/>
            <person name="Badcock K."/>
            <person name="Basham D."/>
            <person name="Brown D."/>
            <person name="Chillingworth T."/>
            <person name="Connor R."/>
            <person name="Davies R.M."/>
            <person name="Devlin K."/>
            <person name="Feltwell T."/>
            <person name="Gentles S."/>
            <person name="Hamlin N."/>
            <person name="Holroyd S."/>
            <person name="Hornsby T."/>
            <person name="Jagels K."/>
            <person name="Krogh A."/>
            <person name="McLean J."/>
            <person name="Moule S."/>
            <person name="Murphy L.D."/>
            <person name="Oliver S."/>
            <person name="Osborne J."/>
            <person name="Quail M.A."/>
            <person name="Rajandream M.A."/>
            <person name="Rogers J."/>
            <person name="Rutter S."/>
            <person name="Seeger K."/>
            <person name="Skelton S."/>
            <person name="Squares S."/>
            <person name="Squares R."/>
            <person name="Sulston J.E."/>
            <person name="Taylor K."/>
            <person name="Whitehead S."/>
            <person name="Barrell B.G."/>
        </authorList>
    </citation>
    <scope>NUCLEOTIDE SEQUENCE [LARGE SCALE GENOMIC DNA]</scope>
    <source>
        <strain>ATCC 25618 / H37Rv</strain>
    </source>
</reference>
<reference key="2">
    <citation type="journal article" date="2001" name="Infect. Immun.">
        <title>Proteomics reveals open reading frames in Mycobacterium tuberculosis H37Rv not predicted by genomics.</title>
        <authorList>
            <person name="Jungblut P.R."/>
            <person name="Muller E.C."/>
            <person name="Mattow J."/>
            <person name="Kaufmann S.H."/>
        </authorList>
    </citation>
    <scope>PROTEIN SEQUENCE OF 18-29</scope>
    <scope>IDENTIFICATION BY MASS SPECTROMETRY</scope>
    <source>
        <strain>ATCC 25618 / H37Rv</strain>
    </source>
</reference>
<reference key="3">
    <citation type="journal article" date="2011" name="Mol. Cell. Proteomics">
        <title>Proteogenomic analysis of Mycobacterium tuberculosis by high resolution mass spectrometry.</title>
        <authorList>
            <person name="Kelkar D.S."/>
            <person name="Kumar D."/>
            <person name="Kumar P."/>
            <person name="Balakrishnan L."/>
            <person name="Muthusamy B."/>
            <person name="Yadav A.K."/>
            <person name="Shrivastava P."/>
            <person name="Marimuthu A."/>
            <person name="Anand S."/>
            <person name="Sundaram H."/>
            <person name="Kingsbury R."/>
            <person name="Harsha H.C."/>
            <person name="Nair B."/>
            <person name="Prasad T.S."/>
            <person name="Chauhan D.S."/>
            <person name="Katoch K."/>
            <person name="Katoch V.M."/>
            <person name="Kumar P."/>
            <person name="Chaerkady R."/>
            <person name="Ramachandran S."/>
            <person name="Dash D."/>
            <person name="Pandey A."/>
        </authorList>
    </citation>
    <scope>IDENTIFICATION BY MASS SPECTROMETRY [LARGE SCALE ANALYSIS]</scope>
    <source>
        <strain>ATCC 25618 / H37Rv</strain>
    </source>
</reference>
<name>Y634A_MYCTU</name>
<protein>
    <recommendedName>
        <fullName>Uncharacterized protein Rv0634A</fullName>
    </recommendedName>
</protein>
<proteinExistence type="evidence at protein level"/>